<reference key="1">
    <citation type="journal article" date="2010" name="PLoS ONE">
        <title>Genome sequence of Cronobacter sakazakii BAA-894 and comparative genomic hybridization analysis with other Cronobacter species.</title>
        <authorList>
            <person name="Kucerova E."/>
            <person name="Clifton S.W."/>
            <person name="Xia X.Q."/>
            <person name="Long F."/>
            <person name="Porwollik S."/>
            <person name="Fulton L."/>
            <person name="Fronick C."/>
            <person name="Minx P."/>
            <person name="Kyung K."/>
            <person name="Warren W."/>
            <person name="Fulton R."/>
            <person name="Feng D."/>
            <person name="Wollam A."/>
            <person name="Shah N."/>
            <person name="Bhonagiri V."/>
            <person name="Nash W.E."/>
            <person name="Hallsworth-Pepin K."/>
            <person name="Wilson R.K."/>
            <person name="McClelland M."/>
            <person name="Forsythe S.J."/>
        </authorList>
    </citation>
    <scope>NUCLEOTIDE SEQUENCE [LARGE SCALE GENOMIC DNA]</scope>
    <source>
        <strain>ATCC BAA-894</strain>
    </source>
</reference>
<gene>
    <name evidence="1" type="primary">sbmC</name>
    <name type="ordered locus">ESA_01209</name>
</gene>
<accession>A7MJM9</accession>
<feature type="chain" id="PRO_0000409698" description="DNA gyrase inhibitor">
    <location>
        <begin position="1"/>
        <end position="157"/>
    </location>
</feature>
<sequence>MDYTIEHVLTRKIAGFHLVGPWEKTVPQGFEQLSLWVDNFHIQPQAWLAVYYDNPQQVAPEKLRADTVVEVPADFTLPENSVGVILTDLPGGQYAVARARVENNDFGTPWLAFFTRLHQDVRYQMAARPCFEIYLNDGKRDGYWDIDMYIPVQTSGE</sequence>
<organism>
    <name type="scientific">Cronobacter sakazakii (strain ATCC BAA-894)</name>
    <name type="common">Enterobacter sakazakii</name>
    <dbReference type="NCBI Taxonomy" id="290339"/>
    <lineage>
        <taxon>Bacteria</taxon>
        <taxon>Pseudomonadati</taxon>
        <taxon>Pseudomonadota</taxon>
        <taxon>Gammaproteobacteria</taxon>
        <taxon>Enterobacterales</taxon>
        <taxon>Enterobacteriaceae</taxon>
        <taxon>Cronobacter</taxon>
    </lineage>
</organism>
<evidence type="ECO:0000255" key="1">
    <source>
        <dbReference type="HAMAP-Rule" id="MF_01896"/>
    </source>
</evidence>
<evidence type="ECO:0000305" key="2"/>
<dbReference type="EMBL" id="CP000783">
    <property type="protein sequence ID" value="ABU76476.1"/>
    <property type="status" value="ALT_INIT"/>
    <property type="molecule type" value="Genomic_DNA"/>
</dbReference>
<dbReference type="RefSeq" id="WP_004385325.1">
    <property type="nucleotide sequence ID" value="NC_009778.1"/>
</dbReference>
<dbReference type="SMR" id="A7MJM9"/>
<dbReference type="GeneID" id="56730072"/>
<dbReference type="KEGG" id="esa:ESA_01209"/>
<dbReference type="HOGENOM" id="CLU_113664_3_2_6"/>
<dbReference type="Proteomes" id="UP000000260">
    <property type="component" value="Chromosome"/>
</dbReference>
<dbReference type="GO" id="GO:0005737">
    <property type="term" value="C:cytoplasm"/>
    <property type="evidence" value="ECO:0007669"/>
    <property type="project" value="UniProtKB-SubCell"/>
</dbReference>
<dbReference type="GO" id="GO:0008657">
    <property type="term" value="F:DNA topoisomerase type II (double strand cut, ATP-hydrolyzing) inhibitor activity"/>
    <property type="evidence" value="ECO:0007669"/>
    <property type="project" value="UniProtKB-UniRule"/>
</dbReference>
<dbReference type="Gene3D" id="3.20.80.10">
    <property type="entry name" value="Regulatory factor, effector binding domain"/>
    <property type="match status" value="1"/>
</dbReference>
<dbReference type="HAMAP" id="MF_01896">
    <property type="entry name" value="DNA_gyrase_inhibitor"/>
    <property type="match status" value="1"/>
</dbReference>
<dbReference type="InterPro" id="IPR010499">
    <property type="entry name" value="AraC_E-bd"/>
</dbReference>
<dbReference type="InterPro" id="IPR050908">
    <property type="entry name" value="DNA_gyrase_inhibitor"/>
</dbReference>
<dbReference type="InterPro" id="IPR024911">
    <property type="entry name" value="DNA_gyrase_inhibitor_GyrI"/>
</dbReference>
<dbReference type="InterPro" id="IPR029442">
    <property type="entry name" value="GyrI-like"/>
</dbReference>
<dbReference type="InterPro" id="IPR011256">
    <property type="entry name" value="Reg_factor_effector_dom_sf"/>
</dbReference>
<dbReference type="NCBIfam" id="NF007451">
    <property type="entry name" value="PRK10016.1"/>
    <property type="match status" value="1"/>
</dbReference>
<dbReference type="PANTHER" id="PTHR40055:SF2">
    <property type="entry name" value="DNA GYRASE INHIBITOR"/>
    <property type="match status" value="1"/>
</dbReference>
<dbReference type="PANTHER" id="PTHR40055">
    <property type="entry name" value="TRANSCRIPTIONAL REGULATOR YGIV-RELATED"/>
    <property type="match status" value="1"/>
</dbReference>
<dbReference type="Pfam" id="PF06445">
    <property type="entry name" value="GyrI-like"/>
    <property type="match status" value="1"/>
</dbReference>
<dbReference type="SMART" id="SM00871">
    <property type="entry name" value="AraC_E_bind"/>
    <property type="match status" value="1"/>
</dbReference>
<dbReference type="SUPFAM" id="SSF55136">
    <property type="entry name" value="Probable bacterial effector-binding domain"/>
    <property type="match status" value="1"/>
</dbReference>
<protein>
    <recommendedName>
        <fullName evidence="1">DNA gyrase inhibitor</fullName>
    </recommendedName>
</protein>
<comment type="function">
    <text evidence="1">Inhibits the supercoiling activity of DNA gyrase. Acts by inhibiting DNA gyrase at an early step, prior to (or at the step of) binding of DNA by the gyrase. It protects cells against toxins that target DNA gyrase, by inhibiting activity of these toxins and reducing the formation of lethal double-strand breaks in the cell.</text>
</comment>
<comment type="subunit">
    <text evidence="1">Interacts with DNA gyrase.</text>
</comment>
<comment type="subcellular location">
    <subcellularLocation>
        <location evidence="1">Cytoplasm</location>
    </subcellularLocation>
</comment>
<comment type="similarity">
    <text evidence="1">Belongs to the DNA gyrase inhibitor family.</text>
</comment>
<comment type="sequence caution" evidence="2">
    <conflict type="erroneous initiation">
        <sequence resource="EMBL-CDS" id="ABU76476"/>
    </conflict>
    <text>Extended N-terminus.</text>
</comment>
<name>SBMC_CROS8</name>
<proteinExistence type="inferred from homology"/>
<keyword id="KW-0963">Cytoplasm</keyword>
<keyword id="KW-1185">Reference proteome</keyword>
<keyword id="KW-0346">Stress response</keyword>